<keyword id="KW-0325">Glycoprotein</keyword>
<keyword id="KW-0461">Malaria</keyword>
<keyword id="KW-0472">Membrane</keyword>
<keyword id="KW-0732">Signal</keyword>
<keyword id="KW-0812">Transmembrane</keyword>
<keyword id="KW-1133">Transmembrane helix</keyword>
<proteinExistence type="evidence at transcript level"/>
<name>PK66_PLAKU</name>
<accession>P21303</accession>
<gene>
    <name type="primary">PK66</name>
</gene>
<reference key="1">
    <citation type="journal article" date="1990" name="J. Biol. Chem.">
        <title>A merozoite receptor protein from Plasmodium knowlesi is highly conserved and distributed throughout Plasmodium.</title>
        <authorList>
            <person name="Waters A.P."/>
            <person name="Thomas A.W."/>
            <person name="Deans J.A."/>
            <person name="Mitchell G.H."/>
            <person name="Hudson D.E."/>
            <person name="Miller L.H."/>
            <person name="McCutchan T.F."/>
            <person name="Cohen S."/>
        </authorList>
    </citation>
    <scope>NUCLEOTIDE SEQUENCE [MRNA]</scope>
    <source>
        <strain>Line W1</strain>
    </source>
</reference>
<reference key="2">
    <citation type="journal article" date="1991" name="Mol. Biochem. Parasitol.">
        <title>Intra-generic conservation and limited inter-strain variation in a protective minor surface antigen of Plasmodium knowlesi merozoites.</title>
        <authorList>
            <person name="Waters A.P."/>
            <person name="Thomas A.W."/>
            <person name="Mitchell G.H."/>
            <person name="McCutchan T.F."/>
        </authorList>
    </citation>
    <scope>NUCLEOTIDE SEQUENCE [GENOMIC DNA]</scope>
    <source>
        <strain>NURI</strain>
    </source>
</reference>
<dbReference type="EMBL" id="M58317">
    <property type="protein sequence ID" value="AAA63444.1"/>
    <property type="molecule type" value="mRNA"/>
</dbReference>
<dbReference type="EMBL" id="M61097">
    <property type="protein sequence ID" value="AAA29728.1"/>
    <property type="molecule type" value="Genomic_DNA"/>
</dbReference>
<dbReference type="SMR" id="P21303"/>
<dbReference type="GlyCosmos" id="P21303">
    <property type="glycosylation" value="6 sites, No reported glycans"/>
</dbReference>
<dbReference type="GO" id="GO:0016020">
    <property type="term" value="C:membrane"/>
    <property type="evidence" value="ECO:0007669"/>
    <property type="project" value="UniProtKB-SubCell"/>
</dbReference>
<dbReference type="Gene3D" id="6.10.250.430">
    <property type="match status" value="1"/>
</dbReference>
<dbReference type="Gene3D" id="4.10.1010.10">
    <property type="entry name" value="Apical membrane antigen 1"/>
    <property type="match status" value="1"/>
</dbReference>
<dbReference type="Gene3D" id="3.50.4.10">
    <property type="entry name" value="Hepatocyte Growth Factor"/>
    <property type="match status" value="2"/>
</dbReference>
<dbReference type="InterPro" id="IPR003298">
    <property type="entry name" value="Apmem_Ag1"/>
</dbReference>
<dbReference type="InterPro" id="IPR024056">
    <property type="entry name" value="Apmem_Ag1_dom_sf"/>
</dbReference>
<dbReference type="Pfam" id="PF02430">
    <property type="entry name" value="AMA-1"/>
    <property type="match status" value="1"/>
</dbReference>
<dbReference type="PRINTS" id="PR01361">
    <property type="entry name" value="MEROZOITESA"/>
</dbReference>
<dbReference type="SMART" id="SM00815">
    <property type="entry name" value="AMA-1"/>
    <property type="match status" value="1"/>
</dbReference>
<dbReference type="SUPFAM" id="SSF82910">
    <property type="entry name" value="Apical membrane antigen 1"/>
    <property type="match status" value="1"/>
</dbReference>
<organism>
    <name type="scientific">Plasmodium knowlesi (strain nuri)</name>
    <dbReference type="NCBI Taxonomy" id="5852"/>
    <lineage>
        <taxon>Eukaryota</taxon>
        <taxon>Sar</taxon>
        <taxon>Alveolata</taxon>
        <taxon>Apicomplexa</taxon>
        <taxon>Aconoidasida</taxon>
        <taxon>Haemosporida</taxon>
        <taxon>Plasmodiidae</taxon>
        <taxon>Plasmodium</taxon>
        <taxon>Plasmodium (Plasmodium)</taxon>
    </lineage>
</organism>
<comment type="function">
    <text>Merozoite receptor PK66 is a surface antigen involved in parasite invasion of erythrocytes.</text>
</comment>
<comment type="subcellular location">
    <subcellularLocation>
        <location>Membrane</location>
        <topology>Single-pass type I membrane protein</topology>
    </subcellularLocation>
    <text>Concentrated at the apical end prior to rupture, following which it can distribute itself entirely across the surface of the free merozoite. During invasion PK66 is excluded from the erythrocyte at, and behind, the invasion interface.</text>
</comment>
<comment type="miscellaneous">
    <text>PK66 expressed in mature schizonts is rapidly processed as the schizont ruptures, yielding a 42/44 kDa doublet associated with the surface merozoite.</text>
</comment>
<comment type="similarity">
    <text evidence="2">Belongs to the apicomplexan parasites AMA1 family.</text>
</comment>
<protein>
    <recommendedName>
        <fullName>Merozoite receptor PK66</fullName>
    </recommendedName>
    <alternativeName>
        <fullName>66 kDa protective minor surface antigen</fullName>
    </alternativeName>
</protein>
<feature type="signal peptide" evidence="1">
    <location>
        <begin position="1"/>
        <end position="13"/>
    </location>
</feature>
<feature type="chain" id="PRO_0000024608" description="Merozoite receptor PK66">
    <location>
        <begin position="14"/>
        <end position="563"/>
    </location>
</feature>
<feature type="topological domain" description="Extracellular" evidence="1">
    <location>
        <begin position="14"/>
        <end position="487"/>
    </location>
</feature>
<feature type="transmembrane region" description="Helical" evidence="1">
    <location>
        <begin position="488"/>
        <end position="508"/>
    </location>
</feature>
<feature type="topological domain" description="Cytoplasmic" evidence="1">
    <location>
        <begin position="509"/>
        <end position="563"/>
    </location>
</feature>
<feature type="glycosylation site" description="N-linked (GlcNAc...) asparagine" evidence="1">
    <location>
        <position position="36"/>
    </location>
</feature>
<feature type="glycosylation site" description="N-linked (GlcNAc...) asparagine" evidence="1">
    <location>
        <position position="107"/>
    </location>
</feature>
<feature type="glycosylation site" description="N-linked (GlcNAc...) asparagine" evidence="1">
    <location>
        <position position="176"/>
    </location>
</feature>
<feature type="glycosylation site" description="N-linked (GlcNAc...) asparagine" evidence="1">
    <location>
        <position position="189"/>
    </location>
</feature>
<feature type="glycosylation site" description="N-linked (GlcNAc...) asparagine" evidence="1">
    <location>
        <position position="238"/>
    </location>
</feature>
<feature type="glycosylation site" description="N-linked (GlcNAc...) asparagine" evidence="1">
    <location>
        <position position="441"/>
    </location>
</feature>
<feature type="sequence variant" description="In strain: Line W1.">
    <original>N</original>
    <variation>K</variation>
    <location>
        <position position="228"/>
    </location>
</feature>
<evidence type="ECO:0000255" key="1"/>
<evidence type="ECO:0000305" key="2"/>
<sequence>MNKIYYILFLSAQCLVHMGKCERNQKTTRLTRSANNASLEKGPIIERSIRMSNPWKAFMEKYDLERAHNSGIRIDLGEDAEVGNSKYRIPAGKCPVFGKGIVIENSNVSFLTPVATGAQRLKEGGFAFPNADDHISPITIANLKERYKENADLMKLNDIALCKTHAASFVIAEDQNTSYRHPAVYDEKNKTCYMLYLSAQENMGPRYCSPDSQNKDAMFCFKPDKNENFDNLVYLSKNVSNDWENKCPRKNLGNAKFGLWVDGNCEEIPYVNEVEARSLRECNRIVFEASASDQPRQYEEELTDYEKIQEGFRQNNRDMIKSAFLPVGAFNSDNFKSKGRGYNWANFDSVNNKCYIFNTKPTCLINDKNFFATTALSHPQEVDNEFPCSIYKDEIEREIKKQSRNMNLYSVDKERIVLPRIFISTDKESIKCPCEPEHISNSTCNFYVCNCVEKRAEIKENNEVIIKEEFKEDYENPDGKHKKKMLLIIIGVTGAVCVVAVASLFYFRKKAQDDKYDKMDQAEAYGKTANTRKDEMLDPEASFWGEDKRASHTTPVLMEKPYY</sequence>